<dbReference type="EC" id="2.7.7.6"/>
<dbReference type="EMBL" id="AY261361">
    <property type="status" value="NOT_ANNOTATED_CDS"/>
    <property type="molecule type" value="Genomic_DNA"/>
</dbReference>
<dbReference type="SMR" id="P0C8K3"/>
<dbReference type="Proteomes" id="UP000000860">
    <property type="component" value="Segment"/>
</dbReference>
<dbReference type="GO" id="GO:0000428">
    <property type="term" value="C:DNA-directed RNA polymerase complex"/>
    <property type="evidence" value="ECO:0007669"/>
    <property type="project" value="UniProtKB-KW"/>
</dbReference>
<dbReference type="GO" id="GO:0030430">
    <property type="term" value="C:host cell cytoplasm"/>
    <property type="evidence" value="ECO:0007669"/>
    <property type="project" value="UniProtKB-SubCell"/>
</dbReference>
<dbReference type="GO" id="GO:0044423">
    <property type="term" value="C:virion component"/>
    <property type="evidence" value="ECO:0007669"/>
    <property type="project" value="UniProtKB-KW"/>
</dbReference>
<dbReference type="GO" id="GO:0003677">
    <property type="term" value="F:DNA binding"/>
    <property type="evidence" value="ECO:0007669"/>
    <property type="project" value="InterPro"/>
</dbReference>
<dbReference type="GO" id="GO:0003899">
    <property type="term" value="F:DNA-directed RNA polymerase activity"/>
    <property type="evidence" value="ECO:0007669"/>
    <property type="project" value="UniProtKB-EC"/>
</dbReference>
<dbReference type="GO" id="GO:0032549">
    <property type="term" value="F:ribonucleoside binding"/>
    <property type="evidence" value="ECO:0007669"/>
    <property type="project" value="InterPro"/>
</dbReference>
<dbReference type="GO" id="GO:0008270">
    <property type="term" value="F:zinc ion binding"/>
    <property type="evidence" value="ECO:0007669"/>
    <property type="project" value="UniProtKB-KW"/>
</dbReference>
<dbReference type="GO" id="GO:0006351">
    <property type="term" value="P:DNA-templated transcription"/>
    <property type="evidence" value="ECO:0007669"/>
    <property type="project" value="InterPro"/>
</dbReference>
<dbReference type="GO" id="GO:0019083">
    <property type="term" value="P:viral transcription"/>
    <property type="evidence" value="ECO:0007669"/>
    <property type="project" value="UniProtKB-KW"/>
</dbReference>
<dbReference type="Gene3D" id="2.40.50.150">
    <property type="match status" value="1"/>
</dbReference>
<dbReference type="Gene3D" id="3.90.1100.10">
    <property type="match status" value="2"/>
</dbReference>
<dbReference type="Gene3D" id="2.40.270.10">
    <property type="entry name" value="DNA-directed RNA polymerase, subunit 2, domain 6"/>
    <property type="match status" value="1"/>
</dbReference>
<dbReference type="Gene3D" id="3.90.1800.10">
    <property type="entry name" value="RNA polymerase alpha subunit dimerisation domain"/>
    <property type="match status" value="1"/>
</dbReference>
<dbReference type="Gene3D" id="3.90.1110.10">
    <property type="entry name" value="RNA polymerase Rpb2, domain 2"/>
    <property type="match status" value="1"/>
</dbReference>
<dbReference type="InterPro" id="IPR015712">
    <property type="entry name" value="DNA-dir_RNA_pol_su2"/>
</dbReference>
<dbReference type="InterPro" id="IPR007120">
    <property type="entry name" value="DNA-dir_RNAP_su2_dom"/>
</dbReference>
<dbReference type="InterPro" id="IPR037033">
    <property type="entry name" value="DNA-dir_RNAP_su2_hyb_sf"/>
</dbReference>
<dbReference type="InterPro" id="IPR007121">
    <property type="entry name" value="RNA_pol_bsu_CS"/>
</dbReference>
<dbReference type="InterPro" id="IPR007644">
    <property type="entry name" value="RNA_pol_bsu_protrusion"/>
</dbReference>
<dbReference type="InterPro" id="IPR007642">
    <property type="entry name" value="RNA_pol_Rpb2_2"/>
</dbReference>
<dbReference type="InterPro" id="IPR037034">
    <property type="entry name" value="RNA_pol_Rpb2_2_sf"/>
</dbReference>
<dbReference type="InterPro" id="IPR007645">
    <property type="entry name" value="RNA_pol_Rpb2_3"/>
</dbReference>
<dbReference type="InterPro" id="IPR007646">
    <property type="entry name" value="RNA_pol_Rpb2_4"/>
</dbReference>
<dbReference type="InterPro" id="IPR007641">
    <property type="entry name" value="RNA_pol_Rpb2_7"/>
</dbReference>
<dbReference type="InterPro" id="IPR014724">
    <property type="entry name" value="RNA_pol_RPB2_OB-fold"/>
</dbReference>
<dbReference type="PANTHER" id="PTHR20856">
    <property type="entry name" value="DNA-DIRECTED RNA POLYMERASE I SUBUNIT 2"/>
    <property type="match status" value="1"/>
</dbReference>
<dbReference type="Pfam" id="PF04563">
    <property type="entry name" value="RNA_pol_Rpb2_1"/>
    <property type="match status" value="1"/>
</dbReference>
<dbReference type="Pfam" id="PF04561">
    <property type="entry name" value="RNA_pol_Rpb2_2"/>
    <property type="match status" value="1"/>
</dbReference>
<dbReference type="Pfam" id="PF04565">
    <property type="entry name" value="RNA_pol_Rpb2_3"/>
    <property type="match status" value="1"/>
</dbReference>
<dbReference type="Pfam" id="PF04566">
    <property type="entry name" value="RNA_pol_Rpb2_4"/>
    <property type="match status" value="1"/>
</dbReference>
<dbReference type="Pfam" id="PF00562">
    <property type="entry name" value="RNA_pol_Rpb2_6"/>
    <property type="match status" value="1"/>
</dbReference>
<dbReference type="Pfam" id="PF04560">
    <property type="entry name" value="RNA_pol_Rpb2_7"/>
    <property type="match status" value="1"/>
</dbReference>
<dbReference type="SUPFAM" id="SSF64484">
    <property type="entry name" value="beta and beta-prime subunits of DNA dependent RNA-polymerase"/>
    <property type="match status" value="1"/>
</dbReference>
<dbReference type="PROSITE" id="PS01166">
    <property type="entry name" value="RNA_POL_BETA"/>
    <property type="match status" value="1"/>
</dbReference>
<sequence length="1242" mass="139808">MEPLRPQITYGPIEAVNNEELTEADMLSFISAAVNSTGLIGYNIKSFDDLMDNGIPQIVKQMFNVDITYKDQRDHTEIDKLRESVQIQFNFTDVNIERPQHRNYSQGNKINLLPNKARLCGLSYSGPVNLAAEVILTAHYSNGRQEVKRASIPPFQVSTFPIMRGSNRCHTYHLSKTAKKEIGEDPNEPGGYFIARGGEWVVDLLENIRFNTLHIHYHTMQQGNNEIIRGEFISQPGGAFENSSQIIIRYMTTGAITIEINSTKFSKLRIPWYLIFRMFGMTGDDSIIEQVVFDLESNSPVNTFMIEILEKSIHVSDPIFQPVQHELNREKIIQFLSEKVSKFVSNPSAYKSDENAVQYLNERQLTILDKILLPHMGQTADTRVRKLRFLGLLIHKILLVIMNVFPPTDRDSYRTKRVHGSGVSLAKAFKAIFNTSVIAPIINGFKELLKQTAFEDLTQRNIIEAFSAALSKNSASDLNRSMEQSIISGNKTIMVRQRPIVNRVSTQSLERKNLLNTISALRTVNTHSTTNASKQTERADMMRRVHASYPGYICVAQSADTGEKVGMSKQLAITANVCTAGEVLSLKQRLLSDPAIQQLADVSNKDIVRKGLARVFINGEWIGCCTNAFELAQRYRMLRREGKIVHPHTTIYWDSMVDEVEFWLDVGRLTRPLLIVDNNIEKYNKACYKAAEARKKGDKDWEKHKIPFIQNTRFTSQMAKDILAGTLTLEDLVAQGICEFITPEEAENCLVAFSITELRKHKHDVTRRFTHVDVPQAILGLAALVSPYANCTQPARVTYETNQGRQTGGWYCFSWPYRVDMNRFFQFYNEMPLVKTIAHNYVIPNGLNTIVAYMIYGGYNQEDSVIVSQSFIDRGGFAGTFYREEKVELESDIESFGKPDPLITKNLKPGANYEKLVDGFVPVGTVVKKGDIIIGKVAKIRGEKDELNKYIDRSVMYGFDEPAVVDAVMRPHGPNDEIFGLMRLRYERNLNIGDKMSSRSGNKGIAALALPTSDMPFTEDGLQPDLIVNPHSHPSRMTNGQMIETTVGLANALQGVVTDGTAFLPINVQLLSERLAQEGLRFNGCQKMFNGQTGEYFDAAIFIGPTYHQRLQKFVLDDRYAVASYGPTDALTGQPLDGKRSHGGLRLGEMEHWVLTAQGAMQTIIEKSHDDSDGCISYICRNCGEPAIYNASHPIYKCMNCDVQADISMVDSRRSSIVFQHEMRAANVNITSVLSPRVFQPA</sequence>
<organism>
    <name type="scientific">African swine fever virus (isolate Tick/Malawi/Lil 20-1/1983)</name>
    <name type="common">ASFV</name>
    <dbReference type="NCBI Taxonomy" id="10500"/>
    <lineage>
        <taxon>Viruses</taxon>
        <taxon>Varidnaviria</taxon>
        <taxon>Bamfordvirae</taxon>
        <taxon>Nucleocytoviricota</taxon>
        <taxon>Pokkesviricetes</taxon>
        <taxon>Asfuvirales</taxon>
        <taxon>Asfarviridae</taxon>
        <taxon>Asfivirus</taxon>
        <taxon>African swine fever virus</taxon>
    </lineage>
</organism>
<organismHost>
    <name type="scientific">Ornithodoros</name>
    <name type="common">relapsing fever ticks</name>
    <dbReference type="NCBI Taxonomy" id="6937"/>
</organismHost>
<organismHost>
    <name type="scientific">Phacochoerus aethiopicus</name>
    <name type="common">Warthog</name>
    <dbReference type="NCBI Taxonomy" id="85517"/>
</organismHost>
<organismHost>
    <name type="scientific">Phacochoerus africanus</name>
    <name type="common">Warthog</name>
    <dbReference type="NCBI Taxonomy" id="41426"/>
</organismHost>
<organismHost>
    <name type="scientific">Potamochoerus larvatus</name>
    <name type="common">Bushpig</name>
    <dbReference type="NCBI Taxonomy" id="273792"/>
</organismHost>
<organismHost>
    <name type="scientific">Sus scrofa</name>
    <name type="common">Pig</name>
    <dbReference type="NCBI Taxonomy" id="9823"/>
</organismHost>
<proteinExistence type="inferred from homology"/>
<gene>
    <name type="ordered locus">Mal-061</name>
</gene>
<feature type="chain" id="PRO_0000355626" description="DNA-directed RNA polymerase RPB2 homolog">
    <location>
        <begin position="1"/>
        <end position="1242"/>
    </location>
</feature>
<feature type="zinc finger region" description="C4-type">
    <location>
        <begin position="1180"/>
        <end position="1201"/>
    </location>
</feature>
<comment type="function">
    <text evidence="1">Catalytic component of the DNA-directed RNA polymerase (RNAP) that catalyzes the transcription in the cytoplasm of viral DNA into RNA using the four ribonucleoside triphosphates as substrates (By similarity). Forms the polymerase active center together with RPB1 (By similarity). Part of the core element with the central large cleft, the clamp element that moves to open and close the cleft and the jaws that are thought to grab the incoming DNA template (By similarity).</text>
</comment>
<comment type="catalytic activity">
    <reaction>
        <text>RNA(n) + a ribonucleoside 5'-triphosphate = RNA(n+1) + diphosphate</text>
        <dbReference type="Rhea" id="RHEA:21248"/>
        <dbReference type="Rhea" id="RHEA-COMP:14527"/>
        <dbReference type="Rhea" id="RHEA-COMP:17342"/>
        <dbReference type="ChEBI" id="CHEBI:33019"/>
        <dbReference type="ChEBI" id="CHEBI:61557"/>
        <dbReference type="ChEBI" id="CHEBI:140395"/>
        <dbReference type="EC" id="2.7.7.6"/>
    </reaction>
</comment>
<comment type="subunit">
    <text evidence="2">Part of the viral DNA-directed RNA polymerase that consists of 8 polII-like subunits (RPB1, RPB2, RPB3, RPB5, RPB6, RPB7, RPB9, RPB10), a capping enzyme and a termination factor.</text>
</comment>
<comment type="subcellular location">
    <subcellularLocation>
        <location evidence="3">Host cytoplasm</location>
    </subcellularLocation>
    <subcellularLocation>
        <location evidence="2">Virion</location>
    </subcellularLocation>
    <text evidence="2">Found in association with viral nucleoid.</text>
</comment>
<comment type="induction">
    <text evidence="3">Expressed in the late phase of the viral replicative cycle.</text>
</comment>
<comment type="miscellaneous">
    <text evidence="1">The binding of ribonucleoside triphosphate to the RNA polymerase transcribing complex probably involves a two-step mechanism. The initial binding seems to occur at the entry (E) site and involves a magnesium ion coordinated by three conserved aspartate residues of the two largest RNA Pol subunits.</text>
</comment>
<comment type="similarity">
    <text evidence="3">Belongs to the RNA polymerase beta chain family.</text>
</comment>
<reference key="1">
    <citation type="submission" date="2003-03" db="EMBL/GenBank/DDBJ databases">
        <title>African swine fever virus genomes.</title>
        <authorList>
            <person name="Kutish G.F."/>
            <person name="Rock D.L."/>
        </authorList>
    </citation>
    <scope>NUCLEOTIDE SEQUENCE [LARGE SCALE GENOMIC DNA]</scope>
</reference>
<name>RPB2_ASFM2</name>
<accession>P0C8K3</accession>
<evidence type="ECO:0000250" key="1">
    <source>
        <dbReference type="UniProtKB" id="P30876"/>
    </source>
</evidence>
<evidence type="ECO:0000250" key="2">
    <source>
        <dbReference type="UniProtKB" id="P42487"/>
    </source>
</evidence>
<evidence type="ECO:0000305" key="3"/>
<keyword id="KW-0240">DNA-directed RNA polymerase</keyword>
<keyword id="KW-1035">Host cytoplasm</keyword>
<keyword id="KW-0426">Late protein</keyword>
<keyword id="KW-0479">Metal-binding</keyword>
<keyword id="KW-0548">Nucleotidyltransferase</keyword>
<keyword id="KW-0804">Transcription</keyword>
<keyword id="KW-0808">Transferase</keyword>
<keyword id="KW-1195">Viral transcription</keyword>
<keyword id="KW-0946">Virion</keyword>
<keyword id="KW-0862">Zinc</keyword>
<keyword id="KW-0863">Zinc-finger</keyword>
<protein>
    <recommendedName>
        <fullName evidence="2">DNA-directed RNA polymerase RPB2 homolog</fullName>
        <shortName evidence="3">RPB2 homolog</shortName>
        <ecNumber>2.7.7.6</ecNumber>
    </recommendedName>
</protein>